<sequence length="1897" mass="198408">MELNGIRRRLATAKEAERHRLLLELIRAAAAEALDRPGPLPLDPGRAFGAQGVRGRAAGRLRERLSEATGLPLPATVVFDYPTPGALAGRLCALLLDEPAGPGGANGQMEAEEPIAIVGMGCRLPGDVRSPEGLWRLVHNGTDAISEFPEDRGWTVQQHPDPDHLGTTVTRHAGFLYDAPDFDAGFFAISPGEAVTIDPQHRLLLETTWKAVEDARIDPTSLRGSRTGVFVGLMYSEYGARIRRVPPGAEGYRVVGSMPSVASGRLAYTFGFEGPAVTVDTACSSSLVAMHLAAQSLRKGECTLAVAGGATVMATPWGYIEFSRQRGLAPDGRCRSFSADAAGSSWSEGVGVLLLERLSDARRHGHRVLAVVRGSAVNQDGASNGLTAPNGPAQQRVIRQALAHAGLTTAEVDAVDAHGAGTRLGDPIEAQALLATYGQGRPAGRPLWLGSLKSNIGHTQAAAGAAGVIKMVMAMRHGVLPRSLHITEPTPHVDWTSGAVELLTEARDWPADGRPRRAAVSSFGVGGTNAHIILEQAAPEPERPHAPEADGEPRPLPWPVSGHGAAGLRAQARRLADFLRAGPAAPDADLAYSLATTRATLTDRAVVVAADRAEAIARLTALAEGDQGPRVARATAVPRDRLAFVFPGQGSQWPGMAAELMSCYPVFRESIKECGRSLAPHTDWSLAKVLRGESGAPTLDRVDVVQPALFAVMVSLAALWRSFGVEPSAVAGHSQGEIAAARVAGALSLEDAARVVALRSRALRVLSGRGGMVSVAAPAGQVLRTLERWGGAVSVAAVNGPRSLVISGDPGALGEALAAFEAEGIRARRIPVDYASHSAQVEEIRDTLLTELSGIRPRPATVPFYSTVSGEPLDTTALDTGYWVRNLRDTVQFDRTVRRLLADGHTTFLEMSPHPVLTPGIQETAEEAGADEVLTVESLRRNEGGPARLLTAVAEAHVHGVAVDWSPAFAPHRSPARRPAVLRLSSGAATGLRTRPRPPPMFTTAGLDGIDHPLLGAAIPLADGGGGTLFTGTLSLATHPWLADHAVADVLVVPGTALVEAALRAGAECTGRAMLEELVLQAPLILPEQGTVRIQLSVGGPDGTGRRALILSSRPEDAGADEPWTRHAEGTLAPGGGHPRQDPGPWPPTGAREIDLDDCYRQLAKTGLHYGPAFQGLKRLWRLADDLCLEAELPDSAGESGRYGLHPALFDAALHAAALAGPSGAEPLTRLPFSWSGVALYTAGATRLRARLSFTGPQSLTLTAMDPLGHPVLSVGTLGMRPVTAEALHRAAGTAGTALLRLEWRRQAPEHPAGPDLTGWAWVGAGAPPAQPPDGRPYRDLAALRAELDAGAAVPPVIVLAEPATPEGTDPFTAARAALHRTLAAIQDWAAEERLAGTRLVVLTQGAVAATPGALPDPALAAVWGLVRSAQAEYPDRIGLVDTDDPGRSRAAVAAAVHAGEAQAAVRDGALLVPRLARVTATDGPGGPAWPADGTVLVTGGLGTLGRLVVRHLVTTHGARRLVILSRSGGDSAEVREFVGELLAQGANVQVVKGDAADPAVLERVLDGIPQEHPLAAVAHLAGALDDGVLAAQTPQRLDRVLRPKAEAAWQLHRLTARARVPLLAFSSLSGVLGPAGQAGYAAANAFVDALVQRRRGTGLPGVSMGWGMWATRSGLTGALSDTDARLIARTGVRPLTDEEGLALFDQARATGEPVVFPLGLDITALNSGAPDGIPPLLRGLTARTPARRAGAAEAPEPAGEDLAARLAATPEAERDALLLGVVRGHIAAVLGYDDPRAVAERRPFSDIGFDSLRALQLRNRLGAATGRRLPATLVFDHPNPAALSRYLRTLLLPDPAPAPTAPDGQPGPDQADQVIERLNSASLEEVLDFIDHQLGE</sequence>
<feature type="chain" id="PRO_0000461597" description="Spectinabilin polyketide synthase system protein NorA">
    <location>
        <begin position="1"/>
        <end position="1897"/>
    </location>
</feature>
<feature type="domain" description="Ketosynthase family 3 (KS3)" evidence="3">
    <location>
        <begin position="112"/>
        <end position="536"/>
    </location>
</feature>
<feature type="domain" description="Malonyl-CoA:ACP transacylase (MAT)" evidence="1">
    <location>
        <begin position="644"/>
        <end position="962"/>
    </location>
</feature>
<feature type="domain" description="PKS/mFAS DH" evidence="4">
    <location>
        <begin position="1012"/>
        <end position="1289"/>
    </location>
</feature>
<feature type="domain" description="Ketoreductase (KR)" evidence="1">
    <location>
        <begin position="1494"/>
        <end position="1671"/>
    </location>
</feature>
<feature type="domain" description="Carrier" evidence="2">
    <location>
        <begin position="1777"/>
        <end position="1852"/>
    </location>
</feature>
<feature type="region of interest" description="Disordered" evidence="5">
    <location>
        <begin position="538"/>
        <end position="563"/>
    </location>
</feature>
<feature type="region of interest" description="N-terminal hotdog fold" evidence="4">
    <location>
        <begin position="1012"/>
        <end position="1139"/>
    </location>
</feature>
<feature type="region of interest" description="Disordered" evidence="5">
    <location>
        <begin position="1113"/>
        <end position="1152"/>
    </location>
</feature>
<feature type="region of interest" description="C-terminal hotdog fold" evidence="4">
    <location>
        <begin position="1151"/>
        <end position="1289"/>
    </location>
</feature>
<feature type="region of interest" description="Disordered" evidence="5">
    <location>
        <begin position="1854"/>
        <end position="1873"/>
    </location>
</feature>
<feature type="compositionally biased region" description="Basic and acidic residues" evidence="5">
    <location>
        <begin position="540"/>
        <end position="553"/>
    </location>
</feature>
<feature type="compositionally biased region" description="Low complexity" evidence="5">
    <location>
        <begin position="1862"/>
        <end position="1871"/>
    </location>
</feature>
<feature type="active site" description="For beta-ketoacyl synthase activity" evidence="3">
    <location>
        <position position="283"/>
    </location>
</feature>
<feature type="active site" description="For beta-ketoacyl synthase activity" evidence="3">
    <location>
        <position position="418"/>
    </location>
</feature>
<feature type="active site" description="For beta-ketoacyl synthase activity" evidence="3">
    <location>
        <position position="458"/>
    </location>
</feature>
<feature type="active site" description="Proton acceptor; for dehydratase activity" evidence="4">
    <location>
        <position position="1045"/>
    </location>
</feature>
<feature type="active site" description="Proton donor; for dehydratase activity" evidence="4">
    <location>
        <position position="1211"/>
    </location>
</feature>
<feature type="modified residue" description="O-(pantetheine 4'-phosphoryl)serine" evidence="2">
    <location>
        <position position="1812"/>
    </location>
</feature>
<accession>B4ER92</accession>
<comment type="function">
    <text evidence="6">Component of a type I modular polyketide synthase (PKS) that generates the backbone of the antibiotic spectinabilin (also known as neoaureothin), a nitroaryl-substituted polyketide metabolite (PubMed:17763486). This PKS system accepts the unusual starter unit 4-nitrobenzoyl-CoA and extends it by 6 molecules of (S)-methylmalonyl-CoA and a single molecule of malonyl-CoA (PubMed:17763486). The first module, NorA, is used twice in an iterative fashion (PubMed:17763486).</text>
</comment>
<comment type="catalytic activity">
    <reaction evidence="9">
        <text>4-nitrobenzoyl-CoA + 6 (S)-methylmalonyl-CoA + malonyl-CoA + 6 NADPH + 12 H(+) = demethyldeoxyspectinabilin + 7 CO2 + 6 NADP(+) + 8 CoA + 5 H2O</text>
        <dbReference type="Rhea" id="RHEA:58944"/>
        <dbReference type="ChEBI" id="CHEBI:15377"/>
        <dbReference type="ChEBI" id="CHEBI:15378"/>
        <dbReference type="ChEBI" id="CHEBI:16526"/>
        <dbReference type="ChEBI" id="CHEBI:57287"/>
        <dbReference type="ChEBI" id="CHEBI:57327"/>
        <dbReference type="ChEBI" id="CHEBI:57384"/>
        <dbReference type="ChEBI" id="CHEBI:57783"/>
        <dbReference type="ChEBI" id="CHEBI:58349"/>
        <dbReference type="ChEBI" id="CHEBI:142871"/>
        <dbReference type="ChEBI" id="CHEBI:142872"/>
        <dbReference type="EC" id="2.3.1.290"/>
    </reaction>
    <physiologicalReaction direction="left-to-right" evidence="9">
        <dbReference type="Rhea" id="RHEA:58945"/>
    </physiologicalReaction>
</comment>
<comment type="cofactor">
    <cofactor evidence="2">
        <name>pantetheine 4'-phosphate</name>
        <dbReference type="ChEBI" id="CHEBI:47942"/>
    </cofactor>
</comment>
<comment type="pathway">
    <text evidence="9">Antibiotic biosynthesis.</text>
</comment>
<comment type="pathway">
    <text evidence="9">Polyketide biosynthesis.</text>
</comment>
<comment type="subunit">
    <text evidence="6">The spectinabilin polyketide synthase complex is composed of 4 proteins, NorA, NorA', NorB and NorC (PubMed:17763486). The complex comprises 6 modules with a total of 28 catalytic domains catalyzing 7 chain elongations (PubMed:17763486). NorA comprises one module, NorA' two modules, NorB one module and NorC two modules (PubMed:17763486).</text>
</comment>
<name>NORA_STRON</name>
<keyword id="KW-0012">Acyltransferase</keyword>
<keyword id="KW-0045">Antibiotic biosynthesis</keyword>
<keyword id="KW-0511">Multifunctional enzyme</keyword>
<keyword id="KW-0596">Phosphopantetheine</keyword>
<keyword id="KW-0597">Phosphoprotein</keyword>
<keyword id="KW-0808">Transferase</keyword>
<proteinExistence type="evidence at protein level"/>
<organism>
    <name type="scientific">Streptomyces orinoci</name>
    <name type="common">Streptoverticillium orinoci</name>
    <dbReference type="NCBI Taxonomy" id="67339"/>
    <lineage>
        <taxon>Bacteria</taxon>
        <taxon>Bacillati</taxon>
        <taxon>Actinomycetota</taxon>
        <taxon>Actinomycetes</taxon>
        <taxon>Kitasatosporales</taxon>
        <taxon>Streptomycetaceae</taxon>
        <taxon>Streptomyces</taxon>
    </lineage>
</organism>
<evidence type="ECO:0000255" key="1"/>
<evidence type="ECO:0000255" key="2">
    <source>
        <dbReference type="PROSITE-ProRule" id="PRU00258"/>
    </source>
</evidence>
<evidence type="ECO:0000255" key="3">
    <source>
        <dbReference type="PROSITE-ProRule" id="PRU01348"/>
    </source>
</evidence>
<evidence type="ECO:0000255" key="4">
    <source>
        <dbReference type="PROSITE-ProRule" id="PRU01363"/>
    </source>
</evidence>
<evidence type="ECO:0000256" key="5">
    <source>
        <dbReference type="SAM" id="MobiDB-lite"/>
    </source>
</evidence>
<evidence type="ECO:0000269" key="6">
    <source>
    </source>
</evidence>
<evidence type="ECO:0000303" key="7">
    <source>
    </source>
</evidence>
<evidence type="ECO:0000305" key="8"/>
<evidence type="ECO:0000305" key="9">
    <source>
    </source>
</evidence>
<evidence type="ECO:0000312" key="10">
    <source>
        <dbReference type="EMBL" id="CAO85893.1"/>
    </source>
</evidence>
<dbReference type="EC" id="2.3.1.290" evidence="9"/>
<dbReference type="EMBL" id="AM778535">
    <property type="protein sequence ID" value="CAO85893.1"/>
    <property type="molecule type" value="Genomic_DNA"/>
</dbReference>
<dbReference type="KEGG" id="ag:CAO85893"/>
<dbReference type="BioCyc" id="MetaCyc:MONOMER-20714"/>
<dbReference type="BRENDA" id="2.3.1.290">
    <property type="organism ID" value="16282"/>
</dbReference>
<dbReference type="GO" id="GO:0004315">
    <property type="term" value="F:3-oxoacyl-[acyl-carrier-protein] synthase activity"/>
    <property type="evidence" value="ECO:0007669"/>
    <property type="project" value="InterPro"/>
</dbReference>
<dbReference type="GO" id="GO:0004312">
    <property type="term" value="F:fatty acid synthase activity"/>
    <property type="evidence" value="ECO:0007669"/>
    <property type="project" value="TreeGrafter"/>
</dbReference>
<dbReference type="GO" id="GO:0031177">
    <property type="term" value="F:phosphopantetheine binding"/>
    <property type="evidence" value="ECO:0007669"/>
    <property type="project" value="InterPro"/>
</dbReference>
<dbReference type="GO" id="GO:0017000">
    <property type="term" value="P:antibiotic biosynthetic process"/>
    <property type="evidence" value="ECO:0007669"/>
    <property type="project" value="UniProtKB-KW"/>
</dbReference>
<dbReference type="GO" id="GO:0006633">
    <property type="term" value="P:fatty acid biosynthetic process"/>
    <property type="evidence" value="ECO:0007669"/>
    <property type="project" value="InterPro"/>
</dbReference>
<dbReference type="GO" id="GO:0044550">
    <property type="term" value="P:secondary metabolite biosynthetic process"/>
    <property type="evidence" value="ECO:0007669"/>
    <property type="project" value="UniProtKB-ARBA"/>
</dbReference>
<dbReference type="CDD" id="cd08956">
    <property type="entry name" value="KR_3_FAS_SDR_x"/>
    <property type="match status" value="1"/>
</dbReference>
<dbReference type="CDD" id="cd00833">
    <property type="entry name" value="PKS"/>
    <property type="match status" value="1"/>
</dbReference>
<dbReference type="FunFam" id="3.40.47.10:FF:000019">
    <property type="entry name" value="Polyketide synthase type I"/>
    <property type="match status" value="1"/>
</dbReference>
<dbReference type="FunFam" id="3.40.366.10:FF:000002">
    <property type="entry name" value="Probable polyketide synthase 2"/>
    <property type="match status" value="1"/>
</dbReference>
<dbReference type="FunFam" id="1.10.1200.10:FF:000007">
    <property type="entry name" value="Probable polyketide synthase pks17"/>
    <property type="match status" value="1"/>
</dbReference>
<dbReference type="Gene3D" id="3.30.70.3290">
    <property type="match status" value="1"/>
</dbReference>
<dbReference type="Gene3D" id="3.40.47.10">
    <property type="match status" value="1"/>
</dbReference>
<dbReference type="Gene3D" id="1.10.1200.10">
    <property type="entry name" value="ACP-like"/>
    <property type="match status" value="2"/>
</dbReference>
<dbReference type="Gene3D" id="3.40.366.10">
    <property type="entry name" value="Malonyl-Coenzyme A Acyl Carrier Protein, domain 2"/>
    <property type="match status" value="1"/>
</dbReference>
<dbReference type="Gene3D" id="3.40.50.720">
    <property type="entry name" value="NAD(P)-binding Rossmann-like Domain"/>
    <property type="match status" value="1"/>
</dbReference>
<dbReference type="Gene3D" id="3.10.129.110">
    <property type="entry name" value="Polyketide synthase dehydratase"/>
    <property type="match status" value="1"/>
</dbReference>
<dbReference type="InterPro" id="IPR001227">
    <property type="entry name" value="Ac_transferase_dom_sf"/>
</dbReference>
<dbReference type="InterPro" id="IPR036736">
    <property type="entry name" value="ACP-like_sf"/>
</dbReference>
<dbReference type="InterPro" id="IPR014043">
    <property type="entry name" value="Acyl_transferase_dom"/>
</dbReference>
<dbReference type="InterPro" id="IPR016035">
    <property type="entry name" value="Acyl_Trfase/lysoPLipase"/>
</dbReference>
<dbReference type="InterPro" id="IPR018201">
    <property type="entry name" value="Ketoacyl_synth_AS"/>
</dbReference>
<dbReference type="InterPro" id="IPR014031">
    <property type="entry name" value="Ketoacyl_synth_C"/>
</dbReference>
<dbReference type="InterPro" id="IPR014030">
    <property type="entry name" value="Ketoacyl_synth_N"/>
</dbReference>
<dbReference type="InterPro" id="IPR016036">
    <property type="entry name" value="Malonyl_transacylase_ACP-bd"/>
</dbReference>
<dbReference type="InterPro" id="IPR036291">
    <property type="entry name" value="NAD(P)-bd_dom_sf"/>
</dbReference>
<dbReference type="InterPro" id="IPR032821">
    <property type="entry name" value="PKS_assoc"/>
</dbReference>
<dbReference type="InterPro" id="IPR020841">
    <property type="entry name" value="PKS_Beta-ketoAc_synthase_dom"/>
</dbReference>
<dbReference type="InterPro" id="IPR042104">
    <property type="entry name" value="PKS_dehydratase_sf"/>
</dbReference>
<dbReference type="InterPro" id="IPR020807">
    <property type="entry name" value="PKS_DH"/>
</dbReference>
<dbReference type="InterPro" id="IPR049551">
    <property type="entry name" value="PKS_DH_C"/>
</dbReference>
<dbReference type="InterPro" id="IPR049552">
    <property type="entry name" value="PKS_DH_N"/>
</dbReference>
<dbReference type="InterPro" id="IPR013968">
    <property type="entry name" value="PKS_KR"/>
</dbReference>
<dbReference type="InterPro" id="IPR049900">
    <property type="entry name" value="PKS_mFAS_DH"/>
</dbReference>
<dbReference type="InterPro" id="IPR050091">
    <property type="entry name" value="PKS_NRPS_Biosynth_Enz"/>
</dbReference>
<dbReference type="InterPro" id="IPR020806">
    <property type="entry name" value="PKS_PP-bd"/>
</dbReference>
<dbReference type="InterPro" id="IPR009081">
    <property type="entry name" value="PP-bd_ACP"/>
</dbReference>
<dbReference type="InterPro" id="IPR006162">
    <property type="entry name" value="Ppantetheine_attach_site"/>
</dbReference>
<dbReference type="InterPro" id="IPR055123">
    <property type="entry name" value="SpnB-like_Rossmann"/>
</dbReference>
<dbReference type="InterPro" id="IPR016039">
    <property type="entry name" value="Thiolase-like"/>
</dbReference>
<dbReference type="PANTHER" id="PTHR43775">
    <property type="entry name" value="FATTY ACID SYNTHASE"/>
    <property type="match status" value="1"/>
</dbReference>
<dbReference type="PANTHER" id="PTHR43775:SF51">
    <property type="entry name" value="INACTIVE PHENOLPHTHIOCEROL SYNTHESIS POLYKETIDE SYNTHASE TYPE I PKS1-RELATED"/>
    <property type="match status" value="1"/>
</dbReference>
<dbReference type="Pfam" id="PF00698">
    <property type="entry name" value="Acyl_transf_1"/>
    <property type="match status" value="1"/>
</dbReference>
<dbReference type="Pfam" id="PF16197">
    <property type="entry name" value="KAsynt_C_assoc"/>
    <property type="match status" value="1"/>
</dbReference>
<dbReference type="Pfam" id="PF00109">
    <property type="entry name" value="ketoacyl-synt"/>
    <property type="match status" value="1"/>
</dbReference>
<dbReference type="Pfam" id="PF02801">
    <property type="entry name" value="Ketoacyl-synt_C"/>
    <property type="match status" value="1"/>
</dbReference>
<dbReference type="Pfam" id="PF08659">
    <property type="entry name" value="KR"/>
    <property type="match status" value="1"/>
</dbReference>
<dbReference type="Pfam" id="PF21089">
    <property type="entry name" value="PKS_DH_N"/>
    <property type="match status" value="1"/>
</dbReference>
<dbReference type="Pfam" id="PF00550">
    <property type="entry name" value="PP-binding"/>
    <property type="match status" value="1"/>
</dbReference>
<dbReference type="Pfam" id="PF14765">
    <property type="entry name" value="PS-DH"/>
    <property type="match status" value="1"/>
</dbReference>
<dbReference type="Pfam" id="PF22953">
    <property type="entry name" value="SpnB_Rossmann"/>
    <property type="match status" value="1"/>
</dbReference>
<dbReference type="SMART" id="SM00827">
    <property type="entry name" value="PKS_AT"/>
    <property type="match status" value="1"/>
</dbReference>
<dbReference type="SMART" id="SM00826">
    <property type="entry name" value="PKS_DH"/>
    <property type="match status" value="1"/>
</dbReference>
<dbReference type="SMART" id="SM00822">
    <property type="entry name" value="PKS_KR"/>
    <property type="match status" value="1"/>
</dbReference>
<dbReference type="SMART" id="SM00825">
    <property type="entry name" value="PKS_KS"/>
    <property type="match status" value="1"/>
</dbReference>
<dbReference type="SMART" id="SM00823">
    <property type="entry name" value="PKS_PP"/>
    <property type="match status" value="2"/>
</dbReference>
<dbReference type="SMART" id="SM01294">
    <property type="entry name" value="PKS_PP_betabranch"/>
    <property type="match status" value="1"/>
</dbReference>
<dbReference type="SUPFAM" id="SSF47336">
    <property type="entry name" value="ACP-like"/>
    <property type="match status" value="2"/>
</dbReference>
<dbReference type="SUPFAM" id="SSF52151">
    <property type="entry name" value="FabD/lysophospholipase-like"/>
    <property type="match status" value="1"/>
</dbReference>
<dbReference type="SUPFAM" id="SSF51735">
    <property type="entry name" value="NAD(P)-binding Rossmann-fold domains"/>
    <property type="match status" value="2"/>
</dbReference>
<dbReference type="SUPFAM" id="SSF55048">
    <property type="entry name" value="Probable ACP-binding domain of malonyl-CoA ACP transacylase"/>
    <property type="match status" value="1"/>
</dbReference>
<dbReference type="SUPFAM" id="SSF53901">
    <property type="entry name" value="Thiolase-like"/>
    <property type="match status" value="1"/>
</dbReference>
<dbReference type="PROSITE" id="PS50075">
    <property type="entry name" value="CARRIER"/>
    <property type="match status" value="1"/>
</dbReference>
<dbReference type="PROSITE" id="PS00606">
    <property type="entry name" value="KS3_1"/>
    <property type="match status" value="1"/>
</dbReference>
<dbReference type="PROSITE" id="PS52004">
    <property type="entry name" value="KS3_2"/>
    <property type="match status" value="1"/>
</dbReference>
<dbReference type="PROSITE" id="PS00012">
    <property type="entry name" value="PHOSPHOPANTETHEINE"/>
    <property type="match status" value="1"/>
</dbReference>
<dbReference type="PROSITE" id="PS52019">
    <property type="entry name" value="PKS_MFAS_DH"/>
    <property type="match status" value="1"/>
</dbReference>
<protein>
    <recommendedName>
        <fullName evidence="8">Spectinabilin polyketide synthase system protein NorA</fullName>
        <shortName evidence="8">Spectinabilin PKS system protein NorA</shortName>
        <ecNumber evidence="9">2.3.1.290</ecNumber>
    </recommendedName>
    <alternativeName>
        <fullName evidence="10">Modular polyketide synthase NorA</fullName>
    </alternativeName>
</protein>
<gene>
    <name evidence="7" type="primary">norA</name>
</gene>
<reference evidence="10" key="1">
    <citation type="journal article" date="2007" name="ChemBioChem">
        <title>Non-colinear polyketide biosynthesis in the aureothin and neoaureothin pathways: an evolutionary perspective.</title>
        <authorList>
            <person name="Traitcheva N."/>
            <person name="Jenke-Kodama H."/>
            <person name="He J."/>
            <person name="Dittmann E."/>
            <person name="Hertweck C."/>
        </authorList>
    </citation>
    <scope>NUCLEOTIDE SEQUENCE [GENOMIC DNA]</scope>
    <scope>FUNCTION</scope>
    <scope>SUBUNIT</scope>
    <source>
        <strain>HKI-0260</strain>
    </source>
</reference>